<keyword id="KW-0997">Cell inner membrane</keyword>
<keyword id="KW-1003">Cell membrane</keyword>
<keyword id="KW-0460">Magnesium</keyword>
<keyword id="KW-0472">Membrane</keyword>
<keyword id="KW-0808">Transferase</keyword>
<keyword id="KW-0812">Transmembrane</keyword>
<keyword id="KW-1133">Transmembrane helix</keyword>
<keyword id="KW-0831">Ubiquinone biosynthesis</keyword>
<feature type="chain" id="PRO_0000262800" description="4-hydroxybenzoate octaprenyltransferase">
    <location>
        <begin position="1"/>
        <end position="286"/>
    </location>
</feature>
<feature type="transmembrane region" description="Helical" evidence="1">
    <location>
        <begin position="22"/>
        <end position="42"/>
    </location>
</feature>
<feature type="transmembrane region" description="Helical" evidence="1">
    <location>
        <begin position="45"/>
        <end position="65"/>
    </location>
</feature>
<feature type="transmembrane region" description="Helical" evidence="1">
    <location>
        <begin position="98"/>
        <end position="118"/>
    </location>
</feature>
<feature type="transmembrane region" description="Helical" evidence="1">
    <location>
        <begin position="143"/>
        <end position="163"/>
    </location>
</feature>
<feature type="transmembrane region" description="Helical" evidence="1">
    <location>
        <begin position="213"/>
        <end position="233"/>
    </location>
</feature>
<feature type="transmembrane region" description="Helical" evidence="1">
    <location>
        <begin position="238"/>
        <end position="255"/>
    </location>
</feature>
<feature type="transmembrane region" description="Helical" evidence="1">
    <location>
        <begin position="266"/>
        <end position="286"/>
    </location>
</feature>
<dbReference type="EC" id="2.5.1.39" evidence="1"/>
<dbReference type="EMBL" id="CP000436">
    <property type="protein sequence ID" value="ABI24437.1"/>
    <property type="molecule type" value="Genomic_DNA"/>
</dbReference>
<dbReference type="SMR" id="Q0I0W3"/>
<dbReference type="KEGG" id="hso:HS_0159"/>
<dbReference type="eggNOG" id="COG0382">
    <property type="taxonomic scope" value="Bacteria"/>
</dbReference>
<dbReference type="HOGENOM" id="CLU_034879_1_0_6"/>
<dbReference type="UniPathway" id="UPA00232"/>
<dbReference type="GO" id="GO:0005886">
    <property type="term" value="C:plasma membrane"/>
    <property type="evidence" value="ECO:0007669"/>
    <property type="project" value="UniProtKB-SubCell"/>
</dbReference>
<dbReference type="GO" id="GO:0008412">
    <property type="term" value="F:4-hydroxybenzoate polyprenyltransferase activity"/>
    <property type="evidence" value="ECO:0007669"/>
    <property type="project" value="UniProtKB-UniRule"/>
</dbReference>
<dbReference type="GO" id="GO:0006744">
    <property type="term" value="P:ubiquinone biosynthetic process"/>
    <property type="evidence" value="ECO:0007669"/>
    <property type="project" value="UniProtKB-UniRule"/>
</dbReference>
<dbReference type="CDD" id="cd13959">
    <property type="entry name" value="PT_UbiA_COQ2"/>
    <property type="match status" value="1"/>
</dbReference>
<dbReference type="FunFam" id="1.10.357.140:FF:000002">
    <property type="entry name" value="4-hydroxybenzoate octaprenyltransferase"/>
    <property type="match status" value="1"/>
</dbReference>
<dbReference type="FunFam" id="1.20.120.1780:FF:000001">
    <property type="entry name" value="4-hydroxybenzoate octaprenyltransferase"/>
    <property type="match status" value="1"/>
</dbReference>
<dbReference type="Gene3D" id="1.10.357.140">
    <property type="entry name" value="UbiA prenyltransferase"/>
    <property type="match status" value="1"/>
</dbReference>
<dbReference type="Gene3D" id="1.20.120.1780">
    <property type="entry name" value="UbiA prenyltransferase"/>
    <property type="match status" value="1"/>
</dbReference>
<dbReference type="HAMAP" id="MF_01635">
    <property type="entry name" value="UbiA"/>
    <property type="match status" value="1"/>
</dbReference>
<dbReference type="InterPro" id="IPR006370">
    <property type="entry name" value="HB_polyprenyltransferase-like"/>
</dbReference>
<dbReference type="InterPro" id="IPR039653">
    <property type="entry name" value="Prenyltransferase"/>
</dbReference>
<dbReference type="InterPro" id="IPR000537">
    <property type="entry name" value="UbiA_prenyltransferase"/>
</dbReference>
<dbReference type="InterPro" id="IPR030470">
    <property type="entry name" value="UbiA_prenylTrfase_CS"/>
</dbReference>
<dbReference type="InterPro" id="IPR044878">
    <property type="entry name" value="UbiA_sf"/>
</dbReference>
<dbReference type="NCBIfam" id="TIGR01474">
    <property type="entry name" value="ubiA_proteo"/>
    <property type="match status" value="1"/>
</dbReference>
<dbReference type="PANTHER" id="PTHR11048:SF28">
    <property type="entry name" value="4-HYDROXYBENZOATE POLYPRENYLTRANSFERASE, MITOCHONDRIAL"/>
    <property type="match status" value="1"/>
</dbReference>
<dbReference type="PANTHER" id="PTHR11048">
    <property type="entry name" value="PRENYLTRANSFERASES"/>
    <property type="match status" value="1"/>
</dbReference>
<dbReference type="Pfam" id="PF01040">
    <property type="entry name" value="UbiA"/>
    <property type="match status" value="1"/>
</dbReference>
<dbReference type="PROSITE" id="PS00943">
    <property type="entry name" value="UBIA"/>
    <property type="match status" value="1"/>
</dbReference>
<accession>Q0I0W3</accession>
<protein>
    <recommendedName>
        <fullName evidence="1">4-hydroxybenzoate octaprenyltransferase</fullName>
        <ecNumber evidence="1">2.5.1.39</ecNumber>
    </recommendedName>
    <alternativeName>
        <fullName evidence="1">4-HB polyprenyltransferase</fullName>
    </alternativeName>
</protein>
<evidence type="ECO:0000255" key="1">
    <source>
        <dbReference type="HAMAP-Rule" id="MF_01635"/>
    </source>
</evidence>
<comment type="function">
    <text evidence="1">Catalyzes the prenylation of para-hydroxybenzoate (PHB) with an all-trans polyprenyl group. Mediates the second step in the final reaction sequence of ubiquinone-8 (UQ-8) biosynthesis, which is the condensation of the polyisoprenoid side chain with PHB, generating the first membrane-bound Q intermediate 3-octaprenyl-4-hydroxybenzoate.</text>
</comment>
<comment type="catalytic activity">
    <reaction evidence="1">
        <text>all-trans-octaprenyl diphosphate + 4-hydroxybenzoate = 4-hydroxy-3-(all-trans-octaprenyl)benzoate + diphosphate</text>
        <dbReference type="Rhea" id="RHEA:27782"/>
        <dbReference type="ChEBI" id="CHEBI:1617"/>
        <dbReference type="ChEBI" id="CHEBI:17879"/>
        <dbReference type="ChEBI" id="CHEBI:33019"/>
        <dbReference type="ChEBI" id="CHEBI:57711"/>
        <dbReference type="EC" id="2.5.1.39"/>
    </reaction>
</comment>
<comment type="cofactor">
    <cofactor evidence="1">
        <name>Mg(2+)</name>
        <dbReference type="ChEBI" id="CHEBI:18420"/>
    </cofactor>
</comment>
<comment type="pathway">
    <text evidence="1">Cofactor biosynthesis; ubiquinone biosynthesis.</text>
</comment>
<comment type="subcellular location">
    <subcellularLocation>
        <location evidence="1">Cell inner membrane</location>
        <topology evidence="1">Multi-pass membrane protein</topology>
    </subcellularLocation>
</comment>
<comment type="similarity">
    <text evidence="1">Belongs to the UbiA prenyltransferase family.</text>
</comment>
<gene>
    <name evidence="1" type="primary">ubiA</name>
    <name type="ordered locus">HS_0159</name>
</gene>
<sequence length="286" mass="32468">MTIFAKDKLIAYGQLMRLDKPIGTLLLLWPTLWALYLAEKAMPTLSVLAIFICGVFLMRSAGCVINDYADRHIDGKVKRTSLRPLSTGRATPREAKWLFIVLVFCSFLLVLCLNLYTIGLSVIAVILAFIYPFMKRYTHLPQFFLGAAFGWSIPMAYGATIEALPLECWLLFIANLSWTVAYDTQYAMVDRDDDLRIGVKSTAILFAQYDNKIIALLQIITLIFLFSVGYLSQLNNRYFIVLAIAGLFFVYQCRLTKNRDRASCFNAFLNNNYFGLTVFIAVLFGI</sequence>
<name>UBIA_HISS1</name>
<proteinExistence type="inferred from homology"/>
<organism>
    <name type="scientific">Histophilus somni (strain 129Pt)</name>
    <name type="common">Haemophilus somnus</name>
    <dbReference type="NCBI Taxonomy" id="205914"/>
    <lineage>
        <taxon>Bacteria</taxon>
        <taxon>Pseudomonadati</taxon>
        <taxon>Pseudomonadota</taxon>
        <taxon>Gammaproteobacteria</taxon>
        <taxon>Pasteurellales</taxon>
        <taxon>Pasteurellaceae</taxon>
        <taxon>Histophilus</taxon>
    </lineage>
</organism>
<reference key="1">
    <citation type="journal article" date="2007" name="J. Bacteriol.">
        <title>Complete genome sequence of Haemophilus somnus (Histophilus somni) strain 129Pt and comparison to Haemophilus ducreyi 35000HP and Haemophilus influenzae Rd.</title>
        <authorList>
            <person name="Challacombe J.F."/>
            <person name="Duncan A.J."/>
            <person name="Brettin T.S."/>
            <person name="Bruce D."/>
            <person name="Chertkov O."/>
            <person name="Detter J.C."/>
            <person name="Han C.S."/>
            <person name="Misra M."/>
            <person name="Richardson P."/>
            <person name="Tapia R."/>
            <person name="Thayer N."/>
            <person name="Xie G."/>
            <person name="Inzana T.J."/>
        </authorList>
    </citation>
    <scope>NUCLEOTIDE SEQUENCE [LARGE SCALE GENOMIC DNA]</scope>
    <source>
        <strain>129Pt</strain>
    </source>
</reference>